<accession>Q65272</accession>
<protein>
    <recommendedName>
        <fullName evidence="2">Inner membrane protein p54</fullName>
    </recommendedName>
    <alternativeName>
        <fullName evidence="2">pE183L</fullName>
    </alternativeName>
</protein>
<proteinExistence type="inferred from homology"/>
<evidence type="ECO:0000250" key="1"/>
<evidence type="ECO:0000250" key="2">
    <source>
        <dbReference type="UniProtKB" id="Q65194"/>
    </source>
</evidence>
<evidence type="ECO:0000255" key="3"/>
<evidence type="ECO:0000256" key="4">
    <source>
        <dbReference type="SAM" id="MobiDB-lite"/>
    </source>
</evidence>
<evidence type="ECO:0000305" key="5"/>
<comment type="function">
    <text evidence="2">Inner envelope protein involved, through its interaction with host dynein, in the intracellular microtubule-dependent transport of viral capsid toward viral factories (By similarity). Seems to induce caspase-3 activation and apoptosis (By similarity). Plays a role in virion morphogenesis by recruiting and transforming the host ER membranes into the precursors of the viral envelope (By similarity). Involved in virus attachment to the host cell (By similarity).</text>
</comment>
<comment type="subunit">
    <text evidence="2">Interacts with the host light chain cytoplasmic dynein DYNLL1; this interaction is critical for intracellular microtubule-dependent virus transport toward viral factories.</text>
</comment>
<comment type="subcellular location">
    <subcellularLocation>
        <location evidence="2">Virion membrane</location>
        <topology evidence="2">Single-pass membrane protein</topology>
    </subcellularLocation>
    <subcellularLocation>
        <location evidence="2">Host cytoplasm</location>
        <location evidence="2">Host cytoskeleton</location>
    </subcellularLocation>
    <subcellularLocation>
        <location evidence="2">Host endoplasmic reticulum membrane</location>
    </subcellularLocation>
    <text evidence="2">Detected mainly on membrane-like structures within viral factories. Present in mature extracellular virions. Host DYNLL1 and viral p54 interact at the microtubular organizing center (By similarity). Found in the inner envelope of the virus (By similarity).</text>
</comment>
<comment type="induction">
    <text evidence="5">Expressed in the late phase of the viral replicative cycle.</text>
</comment>
<comment type="similarity">
    <text evidence="5">Belongs to the asfivirus envelope protein p54 family.</text>
</comment>
<keyword id="KW-0053">Apoptosis</keyword>
<keyword id="KW-1176">Cytoplasmic inwards viral transport</keyword>
<keyword id="KW-1035">Host cytoplasm</keyword>
<keyword id="KW-1037">Host cytoskeleton</keyword>
<keyword id="KW-1038">Host endoplasmic reticulum</keyword>
<keyword id="KW-1043">Host membrane</keyword>
<keyword id="KW-0945">Host-virus interaction</keyword>
<keyword id="KW-0426">Late protein</keyword>
<keyword id="KW-0472">Membrane</keyword>
<keyword id="KW-1177">Microtubular inwards viral transport</keyword>
<keyword id="KW-0812">Transmembrane</keyword>
<keyword id="KW-1133">Transmembrane helix</keyword>
<keyword id="KW-0261">Viral envelope protein</keyword>
<keyword id="KW-0946">Virion</keyword>
<keyword id="KW-1160">Virus entry into host cell</keyword>
<reference key="1">
    <citation type="journal article" date="1995" name="J. Gen. Virol.">
        <title>African swine fever virus gene j13L encodes a 25-27KDa protein with variable numbers of amino acid repeats which is present in extracellular virions.</title>
        <authorList>
            <person name="Sun H."/>
            <person name="Jacobs S.C."/>
            <person name="Smith G.L."/>
            <person name="Dixon L.K."/>
            <person name="Parkhouse R.M.E."/>
        </authorList>
    </citation>
    <scope>NUCLEOTIDE SEQUENCE [GENOMIC DNA]</scope>
    <scope>SUBCELLULAR LOCATION</scope>
</reference>
<reference key="2">
    <citation type="journal article" date="1998" name="J. Gen. Virol.">
        <title>Characterization of African swine fever virion proteins j5R and j13L: immuno-localization in virus particles and assembly sites.</title>
        <authorList>
            <person name="Brookes S.M."/>
            <person name="Sun H."/>
            <person name="Dixon L.K."/>
            <person name="Parkhouse R.M.E."/>
        </authorList>
    </citation>
    <scope>SUBCELLULAR LOCATION</scope>
</reference>
<organismHost>
    <name type="scientific">Ornithodoros</name>
    <name type="common">relapsing fever ticks</name>
    <dbReference type="NCBI Taxonomy" id="6937"/>
</organismHost>
<organismHost>
    <name type="scientific">Sus scrofa</name>
    <name type="common">Pig</name>
    <dbReference type="NCBI Taxonomy" id="9823"/>
</organismHost>
<dbReference type="EMBL" id="X84889">
    <property type="protein sequence ID" value="CAA59315.1"/>
    <property type="molecule type" value="Genomic_DNA"/>
</dbReference>
<dbReference type="PIR" id="S52904">
    <property type="entry name" value="S52904"/>
</dbReference>
<dbReference type="SMR" id="Q65272"/>
<dbReference type="GO" id="GO:0043657">
    <property type="term" value="C:host cell"/>
    <property type="evidence" value="ECO:0007669"/>
    <property type="project" value="GOC"/>
</dbReference>
<dbReference type="GO" id="GO:0044167">
    <property type="term" value="C:host cell endoplasmic reticulum membrane"/>
    <property type="evidence" value="ECO:0007669"/>
    <property type="project" value="UniProtKB-SubCell"/>
</dbReference>
<dbReference type="GO" id="GO:0044163">
    <property type="term" value="C:host cytoskeleton"/>
    <property type="evidence" value="ECO:0007669"/>
    <property type="project" value="UniProtKB-SubCell"/>
</dbReference>
<dbReference type="GO" id="GO:0016020">
    <property type="term" value="C:membrane"/>
    <property type="evidence" value="ECO:0007669"/>
    <property type="project" value="UniProtKB-KW"/>
</dbReference>
<dbReference type="GO" id="GO:0019031">
    <property type="term" value="C:viral envelope"/>
    <property type="evidence" value="ECO:0007669"/>
    <property type="project" value="UniProtKB-KW"/>
</dbReference>
<dbReference type="GO" id="GO:0055036">
    <property type="term" value="C:virion membrane"/>
    <property type="evidence" value="ECO:0007669"/>
    <property type="project" value="UniProtKB-SubCell"/>
</dbReference>
<dbReference type="GO" id="GO:0075521">
    <property type="term" value="P:microtubule-dependent intracellular transport of viral material towards nucleus"/>
    <property type="evidence" value="ECO:0007669"/>
    <property type="project" value="UniProtKB-KW"/>
</dbReference>
<dbReference type="GO" id="GO:0046718">
    <property type="term" value="P:symbiont entry into host cell"/>
    <property type="evidence" value="ECO:0007669"/>
    <property type="project" value="UniProtKB-KW"/>
</dbReference>
<dbReference type="InterPro" id="IPR008385">
    <property type="entry name" value="ASFV_p54"/>
</dbReference>
<dbReference type="Pfam" id="PF05568">
    <property type="entry name" value="ASFV_J13L"/>
    <property type="match status" value="1"/>
</dbReference>
<name>P54_ASFL6</name>
<sequence>MDSEFFQPVYPRHYGECLSPTSTPSFFSTHMYTILIAIVVLVIIIIVLIYLFSSRKKKAAAAIEEEDIQFINPYQDQQWAEVTPQPGTSKPAGATTASAGKPVTGRPATNRPATNKPVTDNPVTDRLVMATGGPAAAPAAASAHPTEPYTTVTTQNTASQTMSAIENLRQRNTYTHKDLENSL</sequence>
<feature type="chain" id="PRO_0000373417" description="Inner membrane protein p54">
    <location>
        <begin position="1"/>
        <end position="183"/>
    </location>
</feature>
<feature type="transmembrane region" description="Helical" evidence="3">
    <location>
        <begin position="32"/>
        <end position="52"/>
    </location>
</feature>
<feature type="region of interest" description="Disordered" evidence="4">
    <location>
        <begin position="81"/>
        <end position="157"/>
    </location>
</feature>
<feature type="region of interest" description="Interaction with host DYNLL1" evidence="1">
    <location>
        <begin position="149"/>
        <end position="161"/>
    </location>
</feature>
<feature type="compositionally biased region" description="Polar residues" evidence="4">
    <location>
        <begin position="111"/>
        <end position="122"/>
    </location>
</feature>
<feature type="compositionally biased region" description="Low complexity" evidence="4">
    <location>
        <begin position="130"/>
        <end position="143"/>
    </location>
</feature>
<organism>
    <name type="scientific">African swine fever virus (isolate Pig/Portugal/Lis 60/1960)</name>
    <name type="common">ASFV</name>
    <dbReference type="NCBI Taxonomy" id="82815"/>
    <lineage>
        <taxon>Viruses</taxon>
        <taxon>Varidnaviria</taxon>
        <taxon>Bamfordvirae</taxon>
        <taxon>Nucleocytoviricota</taxon>
        <taxon>Pokkesviricetes</taxon>
        <taxon>Asfuvirales</taxon>
        <taxon>Asfarviridae</taxon>
        <taxon>Asfivirus</taxon>
        <taxon>African swine fever virus</taxon>
    </lineage>
</organism>